<keyword id="KW-0131">Cell cycle</keyword>
<keyword id="KW-0132">Cell division</keyword>
<keyword id="KW-0344">Guanine-nucleotide releasing factor</keyword>
<keyword id="KW-0728">SH3 domain</keyword>
<proteinExistence type="inferred from homology"/>
<organism>
    <name type="scientific">Saccharomyces cerevisiae (strain AWRI1631)</name>
    <name type="common">Baker's yeast</name>
    <dbReference type="NCBI Taxonomy" id="545124"/>
    <lineage>
        <taxon>Eukaryota</taxon>
        <taxon>Fungi</taxon>
        <taxon>Dikarya</taxon>
        <taxon>Ascomycota</taxon>
        <taxon>Saccharomycotina</taxon>
        <taxon>Saccharomycetes</taxon>
        <taxon>Saccharomycetales</taxon>
        <taxon>Saccharomycetaceae</taxon>
        <taxon>Saccharomyces</taxon>
    </lineage>
</organism>
<gene>
    <name type="primary">SDC25</name>
    <name type="synonym">SCD25</name>
    <name type="ORF">AWRI1631_120390</name>
</gene>
<reference key="1">
    <citation type="journal article" date="2008" name="FEMS Yeast Res.">
        <title>Comparative genome analysis of a Saccharomyces cerevisiae wine strain.</title>
        <authorList>
            <person name="Borneman A.R."/>
            <person name="Forgan A.H."/>
            <person name="Pretorius I.S."/>
            <person name="Chambers P.J."/>
        </authorList>
    </citation>
    <scope>NUCLEOTIDE SEQUENCE [LARGE SCALE GENOMIC DNA]</scope>
    <source>
        <strain>AWRI1631</strain>
    </source>
</reference>
<sequence length="1265" mass="146786">MSRTASYAGMTTPVKDKEGHGIPCLQPIDVVECTYQYFTKSQNKLSLRVGDLIYVLTKGSNGWWDGVLIRHSANNNNNSLILDRGWFPPSFTRSILNELHGVPEIGNELEIFQAGLNLKLELSSNPVILSLEDFLDCCRDIEFKEQLAWSPIPVHERKGCCELLYYNQDLDVYCRTLPYLPQNQVETVNDYSSFPAISKIAGKKMPITSSPDLFYLNDCDVVYWYDLTRLVCHYVNLTERDLLANEREKFLTSLDLLTAQITCVYMLFRNLRLVEDSFKKTLKKLIYTLSRFSINANIWFHSTPFEEREAIASQKDPERRSPLLQSILGTFQKFHFLLRLLHFLSNPNELTILPQLTPRFFKDSFNTISWNNPFLRKHLNQHMSHDLPRQMIKAVAGASGIVAENNDEIPASKQGTSCSSETSHHSPSAPFQRRRRGTIFSNVPGSSDESDTIWSKRKKPYPLNEETLSLVRARKEQLDAKLKQMIKSANEYLSNTANFSKMLNFEMNFKTYEEVSGTIPIIDILENLDLTIYLNLRELGDENRVFDEDVAIDDEDKEFLKHSLSSLSYILSDYFNMKQYFHDVVVKFIIVAQHLTLEDPFVFSPMQNDLPTGYYEPMKPSSLNLDNAKDKKNGSQNTDIQEEEDEYEPDPDSLILFHNLINQDSDFNDLKFFNLAHVFKKSCDDYFDVLKLSIEFVNRLILERENLLNYAARMMKNNITELLLRGEEGYGSYDGGETAEKSDTNAVYADSDTKDNDEWRDSQVKLPRYLQREYDSELIWGSNNRIKGGSKHALISYLTDNEKKDLFFNITFLITFRSIFTTTEFLSYLISQYNLDPPEDLCFEEYNEWVTKKLIPVKCRVVEIMTTFFKQYWFPGYDEPDLATLNLDYFAQVAIKENITGSVELLKEVNQKFKHGNMQEATAPMKTLDQQICQEHYWGTLYSTTESILAVDPVLFATQLTILEHEIYCEITIFDCLQKIWKNKYTKSYGASPGLNEFISFANKLTNFISYSIVKEADKSKRAKLLSHFIFIAEYCRKFNNFSSMTAIISALYSSSIYRLEKTWQAVIPQTRDLLQSLDKLMDPKKNFINYRSELKSLHSAPCVPFFGVYLSDLTFTDSGNPDYLVLEHGLKGVHDEKKYINFNKRSRLVDILQEIIYFKKTHYDFTKDRTVIECISNSLENIPHIEKQYQLSLIIEPKPRKKVVPNSNSNNKSQEKSRDDQTDEGKTSTKKDRFSKFQLHKTKKKAPKVSKQRRRMFDFLLSVD</sequence>
<accession>B5VMS9</accession>
<dbReference type="EMBL" id="ABSV01001554">
    <property type="protein sequence ID" value="EDZ70763.1"/>
    <property type="molecule type" value="Genomic_DNA"/>
</dbReference>
<dbReference type="SMR" id="B5VMS9"/>
<dbReference type="OrthoDB" id="17350at4893"/>
<dbReference type="Proteomes" id="UP000008988">
    <property type="component" value="Unassembled WGS sequence"/>
</dbReference>
<dbReference type="GO" id="GO:0005886">
    <property type="term" value="C:plasma membrane"/>
    <property type="evidence" value="ECO:0007669"/>
    <property type="project" value="TreeGrafter"/>
</dbReference>
<dbReference type="GO" id="GO:0005085">
    <property type="term" value="F:guanyl-nucleotide exchange factor activity"/>
    <property type="evidence" value="ECO:0007669"/>
    <property type="project" value="UniProtKB-KW"/>
</dbReference>
<dbReference type="GO" id="GO:0051301">
    <property type="term" value="P:cell division"/>
    <property type="evidence" value="ECO:0007669"/>
    <property type="project" value="UniProtKB-KW"/>
</dbReference>
<dbReference type="GO" id="GO:0007265">
    <property type="term" value="P:Ras protein signal transduction"/>
    <property type="evidence" value="ECO:0007669"/>
    <property type="project" value="TreeGrafter"/>
</dbReference>
<dbReference type="CDD" id="cd00155">
    <property type="entry name" value="RasGEF"/>
    <property type="match status" value="1"/>
</dbReference>
<dbReference type="CDD" id="cd06224">
    <property type="entry name" value="REM"/>
    <property type="match status" value="1"/>
</dbReference>
<dbReference type="CDD" id="cd11883">
    <property type="entry name" value="SH3_Sdc25"/>
    <property type="match status" value="1"/>
</dbReference>
<dbReference type="Gene3D" id="1.10.840.10">
    <property type="entry name" value="Ras guanine-nucleotide exchange factors catalytic domain"/>
    <property type="match status" value="1"/>
</dbReference>
<dbReference type="Gene3D" id="2.30.30.40">
    <property type="entry name" value="SH3 Domains"/>
    <property type="match status" value="1"/>
</dbReference>
<dbReference type="Gene3D" id="1.20.870.10">
    <property type="entry name" value="Son of sevenless (SoS) protein Chain: S domain 1"/>
    <property type="match status" value="1"/>
</dbReference>
<dbReference type="InterPro" id="IPR008937">
    <property type="entry name" value="Ras-like_GEF"/>
</dbReference>
<dbReference type="InterPro" id="IPR000651">
    <property type="entry name" value="Ras-like_Gua-exchang_fac_N"/>
</dbReference>
<dbReference type="InterPro" id="IPR019804">
    <property type="entry name" value="Ras_G-nucl-exch_fac_CS"/>
</dbReference>
<dbReference type="InterPro" id="IPR023578">
    <property type="entry name" value="Ras_GEF_dom_sf"/>
</dbReference>
<dbReference type="InterPro" id="IPR001895">
    <property type="entry name" value="RASGEF_cat_dom"/>
</dbReference>
<dbReference type="InterPro" id="IPR036964">
    <property type="entry name" value="RASGEF_cat_dom_sf"/>
</dbReference>
<dbReference type="InterPro" id="IPR036028">
    <property type="entry name" value="SH3-like_dom_sf"/>
</dbReference>
<dbReference type="InterPro" id="IPR001452">
    <property type="entry name" value="SH3_domain"/>
</dbReference>
<dbReference type="PANTHER" id="PTHR23113:SF368">
    <property type="entry name" value="CELL DIVISION CONTROL PROTEIN 25"/>
    <property type="match status" value="1"/>
</dbReference>
<dbReference type="PANTHER" id="PTHR23113">
    <property type="entry name" value="GUANINE NUCLEOTIDE EXCHANGE FACTOR"/>
    <property type="match status" value="1"/>
</dbReference>
<dbReference type="Pfam" id="PF00617">
    <property type="entry name" value="RasGEF"/>
    <property type="match status" value="1"/>
</dbReference>
<dbReference type="Pfam" id="PF00618">
    <property type="entry name" value="RasGEF_N"/>
    <property type="match status" value="1"/>
</dbReference>
<dbReference type="SMART" id="SM00147">
    <property type="entry name" value="RasGEF"/>
    <property type="match status" value="1"/>
</dbReference>
<dbReference type="SMART" id="SM00229">
    <property type="entry name" value="RasGEFN"/>
    <property type="match status" value="1"/>
</dbReference>
<dbReference type="SMART" id="SM00326">
    <property type="entry name" value="SH3"/>
    <property type="match status" value="1"/>
</dbReference>
<dbReference type="SUPFAM" id="SSF48366">
    <property type="entry name" value="Ras GEF"/>
    <property type="match status" value="1"/>
</dbReference>
<dbReference type="SUPFAM" id="SSF50044">
    <property type="entry name" value="SH3-domain"/>
    <property type="match status" value="1"/>
</dbReference>
<dbReference type="PROSITE" id="PS00720">
    <property type="entry name" value="RASGEF"/>
    <property type="match status" value="1"/>
</dbReference>
<dbReference type="PROSITE" id="PS50009">
    <property type="entry name" value="RASGEF_CAT"/>
    <property type="match status" value="1"/>
</dbReference>
<dbReference type="PROSITE" id="PS50212">
    <property type="entry name" value="RASGEF_NTER"/>
    <property type="match status" value="1"/>
</dbReference>
<dbReference type="PROSITE" id="PS50002">
    <property type="entry name" value="SH3"/>
    <property type="match status" value="1"/>
</dbReference>
<comment type="function">
    <text evidence="1">Promotes the exchange of Ras-bound GDP by GTP.</text>
</comment>
<comment type="miscellaneous">
    <text>Suppresses the CDC25-5 mutation in yeast (restores cAMP level) and has similar functions as CDC25.</text>
</comment>
<feature type="chain" id="PRO_0000393438" description="Guanine nucleotide exchange factor SDC25">
    <location>
        <begin position="1"/>
        <end position="1265"/>
    </location>
</feature>
<feature type="domain" description="SH3" evidence="4">
    <location>
        <begin position="26"/>
        <end position="97"/>
    </location>
</feature>
<feature type="domain" description="N-terminal Ras-GEF" evidence="2">
    <location>
        <begin position="782"/>
        <end position="914"/>
    </location>
</feature>
<feature type="domain" description="Ras-GEF" evidence="3">
    <location>
        <begin position="952"/>
        <end position="1199"/>
    </location>
</feature>
<feature type="region of interest" description="Disordered" evidence="5">
    <location>
        <begin position="409"/>
        <end position="454"/>
    </location>
</feature>
<feature type="region of interest" description="Disordered" evidence="5">
    <location>
        <begin position="623"/>
        <end position="648"/>
    </location>
</feature>
<feature type="region of interest" description="Disordered" evidence="5">
    <location>
        <begin position="1201"/>
        <end position="1252"/>
    </location>
</feature>
<feature type="compositionally biased region" description="Low complexity" evidence="5">
    <location>
        <begin position="416"/>
        <end position="428"/>
    </location>
</feature>
<feature type="compositionally biased region" description="Basic and acidic residues" evidence="5">
    <location>
        <begin position="1214"/>
        <end position="1236"/>
    </location>
</feature>
<feature type="compositionally biased region" description="Basic residues" evidence="5">
    <location>
        <begin position="1239"/>
        <end position="1252"/>
    </location>
</feature>
<protein>
    <recommendedName>
        <fullName>Guanine nucleotide exchange factor SDC25</fullName>
    </recommendedName>
</protein>
<evidence type="ECO:0000250" key="1"/>
<evidence type="ECO:0000255" key="2">
    <source>
        <dbReference type="PROSITE-ProRule" id="PRU00135"/>
    </source>
</evidence>
<evidence type="ECO:0000255" key="3">
    <source>
        <dbReference type="PROSITE-ProRule" id="PRU00168"/>
    </source>
</evidence>
<evidence type="ECO:0000255" key="4">
    <source>
        <dbReference type="PROSITE-ProRule" id="PRU00192"/>
    </source>
</evidence>
<evidence type="ECO:0000256" key="5">
    <source>
        <dbReference type="SAM" id="MobiDB-lite"/>
    </source>
</evidence>
<name>SDC25_YEAS6</name>